<proteinExistence type="evidence at protein level"/>
<organism>
    <name type="scientific">Sphingomonas paucimobilis</name>
    <name type="common">Pseudomonas paucimobilis</name>
    <dbReference type="NCBI Taxonomy" id="13689"/>
    <lineage>
        <taxon>Bacteria</taxon>
        <taxon>Pseudomonadati</taxon>
        <taxon>Pseudomonadota</taxon>
        <taxon>Alphaproteobacteria</taxon>
        <taxon>Sphingomonadales</taxon>
        <taxon>Sphingomonadaceae</taxon>
        <taxon>Sphingomonas</taxon>
    </lineage>
</organism>
<protein>
    <recommendedName>
        <fullName evidence="7">Lignostilbene-alpha,beta-dioxygenase isozyme III</fullName>
        <shortName evidence="5">LSD-III</shortName>
        <ecNumber evidence="4">1.13.11.43</ecNumber>
    </recommendedName>
</protein>
<name>LSDX3_SPHPI</name>
<evidence type="ECO:0000250" key="1"/>
<evidence type="ECO:0000250" key="2">
    <source>
        <dbReference type="UniProtKB" id="Q53353"/>
    </source>
</evidence>
<evidence type="ECO:0000269" key="3">
    <source>
    </source>
</evidence>
<evidence type="ECO:0000269" key="4">
    <source>
    </source>
</evidence>
<evidence type="ECO:0000303" key="5">
    <source>
    </source>
</evidence>
<evidence type="ECO:0000305" key="6"/>
<evidence type="ECO:0000312" key="7">
    <source>
        <dbReference type="EMBL" id="AAB35856.2"/>
    </source>
</evidence>
<dbReference type="EC" id="1.13.11.43" evidence="4"/>
<dbReference type="EMBL" id="S80637">
    <property type="protein sequence ID" value="AAB35856.2"/>
    <property type="molecule type" value="Genomic_DNA"/>
</dbReference>
<dbReference type="PIR" id="JC4324">
    <property type="entry name" value="JC4324"/>
</dbReference>
<dbReference type="SMR" id="Q52008"/>
<dbReference type="BioCyc" id="MetaCyc:MONOMER-18892"/>
<dbReference type="GO" id="GO:0010436">
    <property type="term" value="F:carotenoid dioxygenase activity"/>
    <property type="evidence" value="ECO:0007669"/>
    <property type="project" value="TreeGrafter"/>
</dbReference>
<dbReference type="GO" id="GO:0005506">
    <property type="term" value="F:iron ion binding"/>
    <property type="evidence" value="ECO:0000250"/>
    <property type="project" value="UniProtKB"/>
</dbReference>
<dbReference type="GO" id="GO:0050054">
    <property type="term" value="F:lignostilbene alpha beta-dioxygenase activity"/>
    <property type="evidence" value="ECO:0000314"/>
    <property type="project" value="UniProtKB"/>
</dbReference>
<dbReference type="GO" id="GO:0016121">
    <property type="term" value="P:carotene catabolic process"/>
    <property type="evidence" value="ECO:0007669"/>
    <property type="project" value="TreeGrafter"/>
</dbReference>
<dbReference type="GO" id="GO:0046274">
    <property type="term" value="P:lignin catabolic process"/>
    <property type="evidence" value="ECO:0000314"/>
    <property type="project" value="UniProtKB"/>
</dbReference>
<dbReference type="InterPro" id="IPR004294">
    <property type="entry name" value="Carotenoid_Oase"/>
</dbReference>
<dbReference type="PANTHER" id="PTHR10543">
    <property type="entry name" value="BETA-CAROTENE DIOXYGENASE"/>
    <property type="match status" value="1"/>
</dbReference>
<dbReference type="PANTHER" id="PTHR10543:SF89">
    <property type="entry name" value="CAROTENOID 9,10(9',10')-CLEAVAGE DIOXYGENASE 1"/>
    <property type="match status" value="1"/>
</dbReference>
<dbReference type="Pfam" id="PF03055">
    <property type="entry name" value="RPE65"/>
    <property type="match status" value="1"/>
</dbReference>
<reference evidence="6 7" key="1">
    <citation type="journal article" date="1995" name="Biosci. Biotechnol. Biochem.">
        <title>Cloning of a lignostilbene-alpha,beta-dioxygenase isozyme gene from Pseudomonas paucimobilis TMY1009.</title>
        <authorList>
            <person name="Kamoda S."/>
            <person name="Saburi Y."/>
        </authorList>
    </citation>
    <scope>NUCLEOTIDE SEQUENCE [GENOMIC DNA]</scope>
    <scope>FUNCTION</scope>
    <scope>CATALYTIC ACTIVITY</scope>
    <source>
        <strain evidence="7">TMY1009</strain>
    </source>
</reference>
<reference evidence="6" key="2">
    <citation type="journal article" date="1993" name="Biosci. Biotechnol. Biochem.">
        <title>Structural and enzymatical comparison of lignostilbene-alpha,beta-dioxygenase isozymes, I, II, and III, from Pseudomonas paucimobilis TMY1009.</title>
        <authorList>
            <person name="Kamoda S."/>
            <person name="Saburi Y."/>
        </authorList>
    </citation>
    <scope>PROTEIN SEQUENCE OF 2-26</scope>
    <scope>FUNCTION</scope>
    <scope>CATALYTIC ACTIVITY</scope>
    <scope>ACTIVITY REGULATION</scope>
    <scope>SUBUNIT</scope>
    <source>
        <strain evidence="3">TMY1009</strain>
    </source>
</reference>
<gene>
    <name evidence="7" type="primary">lsdB</name>
</gene>
<sequence>MAHFPDTSGMTGVLRPLRIEGDILDLEVEGEIPAQLDGTFHRVHPDAQFPPRFEDDQFFNGDGMVSLFRFHDGKIDFRQRYAQTDKWKVERKAGKSLFGAYRNPLTDDASVQGMIRGTANTNVMVHAGKLYAMKEDSPCLIMDPLTLETEGYTNFDGKLKNQTFSAHAKIDPVTGNFCNFGYAATGLLTTDCSYFEIDPAGNLLFETEFQVPYYCMMHDYGLTEHYAIFHIVPCSPNWDRLKAGLPHFGFDTTLPVWLGVVPRGPGVTNKDVRWFKAPKTIFASHVMNAFEEGSKIHFDTPQAENNAFPFFPDIHGAPFDPVAARPYLHRWTVDLGSNSEDFAEVRQLTSWIDEFPRVDARYVGQPYRHGWGLVMDPEMEMEFARGRASGFKMNRIGHWDHATGKEDSWWCGPQSIIQEPCFVPRMADSAEGDGYIIALVDNLITNYSDLVVLDALNLKDGPIGRAKLPIRLRSGLHGNWADASKLPIAA</sequence>
<feature type="initiator methionine" description="Removed" evidence="3">
    <location>
        <position position="1"/>
    </location>
</feature>
<feature type="chain" id="PRO_0000416941" description="Lignostilbene-alpha,beta-dioxygenase isozyme III" evidence="3">
    <location>
        <begin position="2"/>
        <end position="490"/>
    </location>
</feature>
<feature type="binding site" evidence="1">
    <location>
        <position position="167"/>
    </location>
    <ligand>
        <name>Fe cation</name>
        <dbReference type="ChEBI" id="CHEBI:24875"/>
        <note>catalytic</note>
    </ligand>
</feature>
<feature type="binding site" evidence="1">
    <location>
        <position position="218"/>
    </location>
    <ligand>
        <name>Fe cation</name>
        <dbReference type="ChEBI" id="CHEBI:24875"/>
        <note>catalytic</note>
    </ligand>
</feature>
<feature type="binding site" evidence="1">
    <location>
        <position position="285"/>
    </location>
    <ligand>
        <name>Fe cation</name>
        <dbReference type="ChEBI" id="CHEBI:24875"/>
        <note>catalytic</note>
    </ligand>
</feature>
<feature type="binding site" evidence="1">
    <location>
        <position position="477"/>
    </location>
    <ligand>
        <name>Fe cation</name>
        <dbReference type="ChEBI" id="CHEBI:24875"/>
        <note>catalytic</note>
    </ligand>
</feature>
<comment type="function">
    <text evidence="3 4">Catalyzes the cleavage of the interphenyl double bond (C alpha-C beta) of lignin-derived polyphenolic diaryl-propane type compounds (Stilbene).</text>
</comment>
<comment type="catalytic activity">
    <reaction evidence="3 4">
        <text>1,2-bis(4-hydroxy-3-methoxyphenyl)ethylene + O2 = 2 vanillin</text>
        <dbReference type="Rhea" id="RHEA:21340"/>
        <dbReference type="ChEBI" id="CHEBI:15379"/>
        <dbReference type="ChEBI" id="CHEBI:17501"/>
        <dbReference type="ChEBI" id="CHEBI:18346"/>
        <dbReference type="EC" id="1.13.11.43"/>
    </reaction>
</comment>
<comment type="cofactor">
    <cofactor evidence="2">
        <name>Fe(2+)</name>
        <dbReference type="ChEBI" id="CHEBI:29033"/>
    </cofactor>
    <text evidence="2">1 Fe(2+) ion per subunit.</text>
</comment>
<comment type="activity regulation">
    <text evidence="3">Activity is high with beta-5 type stilbene and minimal with beta-1 type stilbene. A 4-hydroxyl group and trans-stilbene structure is essential for the binding of substrates to the enzyme.</text>
</comment>
<comment type="subunit">
    <text evidence="3">Homodimer of two beta subunits.</text>
</comment>
<comment type="similarity">
    <text evidence="6">Belongs to the carotenoid oxygenase family.</text>
</comment>
<accession>Q52008</accession>
<keyword id="KW-0223">Dioxygenase</keyword>
<keyword id="KW-0903">Direct protein sequencing</keyword>
<keyword id="KW-0408">Iron</keyword>
<keyword id="KW-0439">Lignin degradation</keyword>
<keyword id="KW-0479">Metal-binding</keyword>
<keyword id="KW-0560">Oxidoreductase</keyword>